<name>RECQ1_CAEBR</name>
<comment type="function">
    <text evidence="1">DNA helicase that may play a role in the repair of DNA that is damaged by ultraviolet light or other mutagens. Exhibits a magnesium-dependent ATP-dependent DNA-helicase activity that unwinds single- and double-stranded DNA in a 3'-5' direction (By similarity).</text>
</comment>
<comment type="catalytic activity">
    <reaction evidence="1">
        <text>Couples ATP hydrolysis with the unwinding of duplex DNA by translocating in the 3'-5' direction.</text>
        <dbReference type="EC" id="5.6.2.4"/>
    </reaction>
</comment>
<comment type="catalytic activity">
    <reaction evidence="1">
        <text>ATP + H2O = ADP + phosphate + H(+)</text>
        <dbReference type="Rhea" id="RHEA:13065"/>
        <dbReference type="ChEBI" id="CHEBI:15377"/>
        <dbReference type="ChEBI" id="CHEBI:15378"/>
        <dbReference type="ChEBI" id="CHEBI:30616"/>
        <dbReference type="ChEBI" id="CHEBI:43474"/>
        <dbReference type="ChEBI" id="CHEBI:456216"/>
    </reaction>
</comment>
<comment type="cofactor">
    <cofactor evidence="1">
        <name>Zn(2+)</name>
        <dbReference type="ChEBI" id="CHEBI:29105"/>
    </cofactor>
    <text evidence="1">Binds 1 Zn(2+) per monomer.</text>
</comment>
<comment type="subcellular location">
    <subcellularLocation>
        <location evidence="1">Nucleus</location>
    </subcellularLocation>
</comment>
<comment type="similarity">
    <text evidence="2">Belongs to the helicase family. RecQ subfamily.</text>
</comment>
<organism>
    <name type="scientific">Caenorhabditis briggsae</name>
    <dbReference type="NCBI Taxonomy" id="6238"/>
    <lineage>
        <taxon>Eukaryota</taxon>
        <taxon>Metazoa</taxon>
        <taxon>Ecdysozoa</taxon>
        <taxon>Nematoda</taxon>
        <taxon>Chromadorea</taxon>
        <taxon>Rhabditida</taxon>
        <taxon>Rhabditina</taxon>
        <taxon>Rhabditomorpha</taxon>
        <taxon>Rhabditoidea</taxon>
        <taxon>Rhabditidae</taxon>
        <taxon>Peloderinae</taxon>
        <taxon>Caenorhabditis</taxon>
    </lineage>
</organism>
<feature type="chain" id="PRO_0000393939" description="Putative ATP-dependent DNA helicase Q1">
    <location>
        <begin position="1"/>
        <end position="618"/>
    </location>
</feature>
<feature type="domain" description="Helicase ATP-binding" evidence="3">
    <location>
        <begin position="95"/>
        <end position="270"/>
    </location>
</feature>
<feature type="domain" description="Helicase C-terminal" evidence="4">
    <location>
        <begin position="295"/>
        <end position="443"/>
    </location>
</feature>
<feature type="region of interest" description="Disordered" evidence="5">
    <location>
        <begin position="586"/>
        <end position="618"/>
    </location>
</feature>
<feature type="short sequence motif" description="DEVH box" evidence="2">
    <location>
        <begin position="214"/>
        <end position="217"/>
    </location>
</feature>
<feature type="compositionally biased region" description="Acidic residues" evidence="5">
    <location>
        <begin position="603"/>
        <end position="618"/>
    </location>
</feature>
<feature type="binding site" evidence="3">
    <location>
        <begin position="108"/>
        <end position="115"/>
    </location>
    <ligand>
        <name>ATP</name>
        <dbReference type="ChEBI" id="CHEBI:30616"/>
    </ligand>
</feature>
<feature type="binding site" evidence="1">
    <location>
        <position position="448"/>
    </location>
    <ligand>
        <name>Zn(2+)</name>
        <dbReference type="ChEBI" id="CHEBI:29105"/>
    </ligand>
</feature>
<feature type="binding site" evidence="1">
    <location>
        <position position="466"/>
    </location>
    <ligand>
        <name>Zn(2+)</name>
        <dbReference type="ChEBI" id="CHEBI:29105"/>
    </ligand>
</feature>
<feature type="binding site" evidence="1">
    <location>
        <position position="470"/>
    </location>
    <ligand>
        <name>Zn(2+)</name>
        <dbReference type="ChEBI" id="CHEBI:29105"/>
    </ligand>
</feature>
<feature type="binding site" evidence="1">
    <location>
        <position position="473"/>
    </location>
    <ligand>
        <name>Zn(2+)</name>
        <dbReference type="ChEBI" id="CHEBI:29105"/>
    </ligand>
</feature>
<dbReference type="EC" id="5.6.2.4" evidence="1"/>
<dbReference type="EMBL" id="HE601517">
    <property type="protein sequence ID" value="CAP20856.1"/>
    <property type="molecule type" value="Genomic_DNA"/>
</dbReference>
<dbReference type="RefSeq" id="XP_002640754.1">
    <property type="nucleotide sequence ID" value="XM_002640708.1"/>
</dbReference>
<dbReference type="SMR" id="A8WK63"/>
<dbReference type="STRING" id="6238.A8WK63"/>
<dbReference type="EnsemblMetazoa" id="CBG24191.1">
    <property type="protein sequence ID" value="CBG24191.1"/>
    <property type="gene ID" value="WBGene00042359"/>
</dbReference>
<dbReference type="GeneID" id="8582748"/>
<dbReference type="KEGG" id="cbr:CBG_24191"/>
<dbReference type="CTD" id="8582748"/>
<dbReference type="WormBase" id="CBG24191">
    <property type="protein sequence ID" value="CBP13372"/>
    <property type="gene ID" value="WBGene00042359"/>
</dbReference>
<dbReference type="eggNOG" id="KOG0353">
    <property type="taxonomic scope" value="Eukaryota"/>
</dbReference>
<dbReference type="HOGENOM" id="CLU_001103_12_5_1"/>
<dbReference type="OMA" id="FKLSTMV"/>
<dbReference type="Proteomes" id="UP000008549">
    <property type="component" value="Chromosome III"/>
</dbReference>
<dbReference type="GO" id="GO:0005694">
    <property type="term" value="C:chromosome"/>
    <property type="evidence" value="ECO:0000318"/>
    <property type="project" value="GO_Central"/>
</dbReference>
<dbReference type="GO" id="GO:0005737">
    <property type="term" value="C:cytoplasm"/>
    <property type="evidence" value="ECO:0000318"/>
    <property type="project" value="GO_Central"/>
</dbReference>
<dbReference type="GO" id="GO:0005634">
    <property type="term" value="C:nucleus"/>
    <property type="evidence" value="ECO:0007669"/>
    <property type="project" value="UniProtKB-SubCell"/>
</dbReference>
<dbReference type="GO" id="GO:0043138">
    <property type="term" value="F:3'-5' DNA helicase activity"/>
    <property type="evidence" value="ECO:0000318"/>
    <property type="project" value="GO_Central"/>
</dbReference>
<dbReference type="GO" id="GO:0005524">
    <property type="term" value="F:ATP binding"/>
    <property type="evidence" value="ECO:0007669"/>
    <property type="project" value="UniProtKB-KW"/>
</dbReference>
<dbReference type="GO" id="GO:0016887">
    <property type="term" value="F:ATP hydrolysis activity"/>
    <property type="evidence" value="ECO:0007669"/>
    <property type="project" value="RHEA"/>
</dbReference>
<dbReference type="GO" id="GO:0003677">
    <property type="term" value="F:DNA binding"/>
    <property type="evidence" value="ECO:0007669"/>
    <property type="project" value="UniProtKB-KW"/>
</dbReference>
<dbReference type="GO" id="GO:0009378">
    <property type="term" value="F:four-way junction helicase activity"/>
    <property type="evidence" value="ECO:0000318"/>
    <property type="project" value="GO_Central"/>
</dbReference>
<dbReference type="GO" id="GO:0046872">
    <property type="term" value="F:metal ion binding"/>
    <property type="evidence" value="ECO:0007669"/>
    <property type="project" value="UniProtKB-KW"/>
</dbReference>
<dbReference type="GO" id="GO:0006260">
    <property type="term" value="P:DNA replication"/>
    <property type="evidence" value="ECO:0000318"/>
    <property type="project" value="GO_Central"/>
</dbReference>
<dbReference type="GO" id="GO:0000724">
    <property type="term" value="P:double-strand break repair via homologous recombination"/>
    <property type="evidence" value="ECO:0000318"/>
    <property type="project" value="GO_Central"/>
</dbReference>
<dbReference type="CDD" id="cd18015">
    <property type="entry name" value="DEXHc_RecQ1"/>
    <property type="match status" value="1"/>
</dbReference>
<dbReference type="CDD" id="cd18794">
    <property type="entry name" value="SF2_C_RecQ"/>
    <property type="match status" value="1"/>
</dbReference>
<dbReference type="FunFam" id="3.40.50.300:FF:000596">
    <property type="entry name" value="ATP-dependent DNA helicase"/>
    <property type="match status" value="1"/>
</dbReference>
<dbReference type="FunFam" id="3.40.50.300:FF:001544">
    <property type="entry name" value="ATP-dependent DNA helicase"/>
    <property type="match status" value="1"/>
</dbReference>
<dbReference type="Gene3D" id="3.40.50.300">
    <property type="entry name" value="P-loop containing nucleotide triphosphate hydrolases"/>
    <property type="match status" value="2"/>
</dbReference>
<dbReference type="Gene3D" id="1.10.10.10">
    <property type="entry name" value="Winged helix-like DNA-binding domain superfamily/Winged helix DNA-binding domain"/>
    <property type="match status" value="1"/>
</dbReference>
<dbReference type="InterPro" id="IPR011545">
    <property type="entry name" value="DEAD/DEAH_box_helicase_dom"/>
</dbReference>
<dbReference type="InterPro" id="IPR004589">
    <property type="entry name" value="DNA_helicase_ATP-dep_RecQ"/>
</dbReference>
<dbReference type="InterPro" id="IPR014001">
    <property type="entry name" value="Helicase_ATP-bd"/>
</dbReference>
<dbReference type="InterPro" id="IPR001650">
    <property type="entry name" value="Helicase_C-like"/>
</dbReference>
<dbReference type="InterPro" id="IPR027417">
    <property type="entry name" value="P-loop_NTPase"/>
</dbReference>
<dbReference type="InterPro" id="IPR032284">
    <property type="entry name" value="RecQ_Zn-bd"/>
</dbReference>
<dbReference type="InterPro" id="IPR036388">
    <property type="entry name" value="WH-like_DNA-bd_sf"/>
</dbReference>
<dbReference type="NCBIfam" id="TIGR00614">
    <property type="entry name" value="recQ_fam"/>
    <property type="match status" value="1"/>
</dbReference>
<dbReference type="PANTHER" id="PTHR13710:SF105">
    <property type="entry name" value="ATP-DEPENDENT DNA HELICASE Q1"/>
    <property type="match status" value="1"/>
</dbReference>
<dbReference type="PANTHER" id="PTHR13710">
    <property type="entry name" value="DNA HELICASE RECQ FAMILY MEMBER"/>
    <property type="match status" value="1"/>
</dbReference>
<dbReference type="Pfam" id="PF00270">
    <property type="entry name" value="DEAD"/>
    <property type="match status" value="1"/>
</dbReference>
<dbReference type="Pfam" id="PF00271">
    <property type="entry name" value="Helicase_C"/>
    <property type="match status" value="1"/>
</dbReference>
<dbReference type="Pfam" id="PF16124">
    <property type="entry name" value="RecQ_Zn_bind"/>
    <property type="match status" value="1"/>
</dbReference>
<dbReference type="SMART" id="SM00487">
    <property type="entry name" value="DEXDc"/>
    <property type="match status" value="1"/>
</dbReference>
<dbReference type="SMART" id="SM00490">
    <property type="entry name" value="HELICc"/>
    <property type="match status" value="1"/>
</dbReference>
<dbReference type="SUPFAM" id="SSF52540">
    <property type="entry name" value="P-loop containing nucleoside triphosphate hydrolases"/>
    <property type="match status" value="1"/>
</dbReference>
<dbReference type="PROSITE" id="PS51192">
    <property type="entry name" value="HELICASE_ATP_BIND_1"/>
    <property type="match status" value="1"/>
</dbReference>
<dbReference type="PROSITE" id="PS51194">
    <property type="entry name" value="HELICASE_CTER"/>
    <property type="match status" value="1"/>
</dbReference>
<reference evidence="7" key="1">
    <citation type="journal article" date="2003" name="PLoS Biol.">
        <title>The genome sequence of Caenorhabditis briggsae: a platform for comparative genomics.</title>
        <authorList>
            <person name="Stein L.D."/>
            <person name="Bao Z."/>
            <person name="Blasiar D."/>
            <person name="Blumenthal T."/>
            <person name="Brent M.R."/>
            <person name="Chen N."/>
            <person name="Chinwalla A."/>
            <person name="Clarke L."/>
            <person name="Clee C."/>
            <person name="Coghlan A."/>
            <person name="Coulson A."/>
            <person name="D'Eustachio P."/>
            <person name="Fitch D.H.A."/>
            <person name="Fulton L.A."/>
            <person name="Fulton R.E."/>
            <person name="Griffiths-Jones S."/>
            <person name="Harris T.W."/>
            <person name="Hillier L.W."/>
            <person name="Kamath R."/>
            <person name="Kuwabara P.E."/>
            <person name="Mardis E.R."/>
            <person name="Marra M.A."/>
            <person name="Miner T.L."/>
            <person name="Minx P."/>
            <person name="Mullikin J.C."/>
            <person name="Plumb R.W."/>
            <person name="Rogers J."/>
            <person name="Schein J.E."/>
            <person name="Sohrmann M."/>
            <person name="Spieth J."/>
            <person name="Stajich J.E."/>
            <person name="Wei C."/>
            <person name="Willey D."/>
            <person name="Wilson R.K."/>
            <person name="Durbin R.M."/>
            <person name="Waterston R.H."/>
        </authorList>
    </citation>
    <scope>NUCLEOTIDE SEQUENCE [LARGE SCALE GENOMIC DNA]</scope>
    <source>
        <strain>AF16</strain>
    </source>
</reference>
<proteinExistence type="inferred from homology"/>
<gene>
    <name type="ORF">CBG24191</name>
</gene>
<sequence length="618" mass="69563">MSNVLLSKLSSELADLDGQVSQIDQQISQLRRKKAELIQKKQALERKIEMKTNEDSDVVLDRWDQDSFPWSDEANQILKNKFRLEKFRPLQSAAINAVMSKEDAIVILSTGGGKSLCYQLPALLAKGLTLVISPLVSLVEDQIMQLQKLGIDAASLNANTPKDEAKRVEQAITKGSTELRLLYVTPEKLAKSKRMMNQLEKSLGVGYLKLIAIDEVHCCSQWGHDFRTDYSFLNVLKRQFKGVPILGLTATATSNVLDDVKKMLGIPVAIVFRAGFNRANLNYKVLTKPGSEDECVEKIVRTIKRKFSGKTGIIYCLSRNDCEKLAKSLKANGIRAKHYHAYMEPVDRSAAHQKWVSGEIQVIVATVAFGMGIDKPDVRFVIHHSLPKSIENYYQESGRAGRDGLPATCILYYRMSDIFKQSSMIQQEQTGIANLYNMVRYASDTVTCRRVKLAEHFEEAWEPSWCQKQCDVCEKSSNSPGTATEDVSKEAVVVINIIEENLSSAKDGSGRITGNKLLDLLSKKLKGRRTKDFCEKLIVHLLLESYLQEDFHYTVYSVISYVVVGLKWRVYNRKDEIPMTLDNTKKGRAEENNRKRKAAVTSSDEEVDVGDDDDVITL</sequence>
<accession>A8WK63</accession>
<protein>
    <recommendedName>
        <fullName evidence="1">Putative ATP-dependent DNA helicase Q1</fullName>
        <ecNumber evidence="1">5.6.2.4</ecNumber>
    </recommendedName>
    <alternativeName>
        <fullName evidence="6">DNA 3'-5' helicase Q1</fullName>
    </alternativeName>
</protein>
<keyword id="KW-0067">ATP-binding</keyword>
<keyword id="KW-0238">DNA-binding</keyword>
<keyword id="KW-0347">Helicase</keyword>
<keyword id="KW-0378">Hydrolase</keyword>
<keyword id="KW-0413">Isomerase</keyword>
<keyword id="KW-0479">Metal-binding</keyword>
<keyword id="KW-0547">Nucleotide-binding</keyword>
<keyword id="KW-0539">Nucleus</keyword>
<keyword id="KW-1185">Reference proteome</keyword>
<keyword id="KW-0862">Zinc</keyword>
<evidence type="ECO:0000250" key="1">
    <source>
        <dbReference type="UniProtKB" id="P46063"/>
    </source>
</evidence>
<evidence type="ECO:0000255" key="2"/>
<evidence type="ECO:0000255" key="3">
    <source>
        <dbReference type="PROSITE-ProRule" id="PRU00541"/>
    </source>
</evidence>
<evidence type="ECO:0000255" key="4">
    <source>
        <dbReference type="PROSITE-ProRule" id="PRU00542"/>
    </source>
</evidence>
<evidence type="ECO:0000256" key="5">
    <source>
        <dbReference type="SAM" id="MobiDB-lite"/>
    </source>
</evidence>
<evidence type="ECO:0000305" key="6"/>
<evidence type="ECO:0000312" key="7">
    <source>
        <dbReference type="EMBL" id="CAP20856.1"/>
    </source>
</evidence>